<protein>
    <recommendedName>
        <fullName evidence="1">dITP/XTP pyrophosphatase</fullName>
        <ecNumber evidence="1">3.6.1.66</ecNumber>
    </recommendedName>
    <alternativeName>
        <fullName evidence="1">Non-canonical purine NTP pyrophosphatase</fullName>
    </alternativeName>
    <alternativeName>
        <fullName evidence="1">Non-standard purine NTP pyrophosphatase</fullName>
    </alternativeName>
    <alternativeName>
        <fullName evidence="1">Nucleoside-triphosphate diphosphatase</fullName>
    </alternativeName>
    <alternativeName>
        <fullName evidence="1">Nucleoside-triphosphate pyrophosphatase</fullName>
        <shortName evidence="1">NTPase</shortName>
    </alternativeName>
</protein>
<keyword id="KW-0378">Hydrolase</keyword>
<keyword id="KW-0460">Magnesium</keyword>
<keyword id="KW-0479">Metal-binding</keyword>
<keyword id="KW-0546">Nucleotide metabolism</keyword>
<keyword id="KW-0547">Nucleotide-binding</keyword>
<name>IXTPA_STAAM</name>
<proteinExistence type="inferred from homology"/>
<dbReference type="EC" id="3.6.1.66" evidence="1"/>
<dbReference type="EMBL" id="BA000017">
    <property type="protein sequence ID" value="BAB57314.1"/>
    <property type="molecule type" value="Genomic_DNA"/>
</dbReference>
<dbReference type="RefSeq" id="WP_000659319.1">
    <property type="nucleotide sequence ID" value="NC_002758.2"/>
</dbReference>
<dbReference type="SMR" id="P64309"/>
<dbReference type="KEGG" id="sav:SAV1152"/>
<dbReference type="HOGENOM" id="CLU_082080_0_2_9"/>
<dbReference type="PhylomeDB" id="P64309"/>
<dbReference type="Proteomes" id="UP000002481">
    <property type="component" value="Chromosome"/>
</dbReference>
<dbReference type="GO" id="GO:0005829">
    <property type="term" value="C:cytosol"/>
    <property type="evidence" value="ECO:0007669"/>
    <property type="project" value="TreeGrafter"/>
</dbReference>
<dbReference type="GO" id="GO:0035870">
    <property type="term" value="F:dITP diphosphatase activity"/>
    <property type="evidence" value="ECO:0007669"/>
    <property type="project" value="RHEA"/>
</dbReference>
<dbReference type="GO" id="GO:0036220">
    <property type="term" value="F:ITP diphosphatase activity"/>
    <property type="evidence" value="ECO:0007669"/>
    <property type="project" value="UniProtKB-EC"/>
</dbReference>
<dbReference type="GO" id="GO:0046872">
    <property type="term" value="F:metal ion binding"/>
    <property type="evidence" value="ECO:0007669"/>
    <property type="project" value="UniProtKB-KW"/>
</dbReference>
<dbReference type="GO" id="GO:0000166">
    <property type="term" value="F:nucleotide binding"/>
    <property type="evidence" value="ECO:0007669"/>
    <property type="project" value="UniProtKB-KW"/>
</dbReference>
<dbReference type="GO" id="GO:0017111">
    <property type="term" value="F:ribonucleoside triphosphate phosphatase activity"/>
    <property type="evidence" value="ECO:0007669"/>
    <property type="project" value="InterPro"/>
</dbReference>
<dbReference type="GO" id="GO:0036222">
    <property type="term" value="F:XTP diphosphatase activity"/>
    <property type="evidence" value="ECO:0007669"/>
    <property type="project" value="RHEA"/>
</dbReference>
<dbReference type="GO" id="GO:0009117">
    <property type="term" value="P:nucleotide metabolic process"/>
    <property type="evidence" value="ECO:0007669"/>
    <property type="project" value="UniProtKB-KW"/>
</dbReference>
<dbReference type="GO" id="GO:0009146">
    <property type="term" value="P:purine nucleoside triphosphate catabolic process"/>
    <property type="evidence" value="ECO:0007669"/>
    <property type="project" value="UniProtKB-UniRule"/>
</dbReference>
<dbReference type="CDD" id="cd00515">
    <property type="entry name" value="HAM1"/>
    <property type="match status" value="1"/>
</dbReference>
<dbReference type="FunFam" id="3.90.950.10:FF:000001">
    <property type="entry name" value="dITP/XTP pyrophosphatase"/>
    <property type="match status" value="1"/>
</dbReference>
<dbReference type="Gene3D" id="3.90.950.10">
    <property type="match status" value="1"/>
</dbReference>
<dbReference type="HAMAP" id="MF_01405">
    <property type="entry name" value="Non_canon_purine_NTPase"/>
    <property type="match status" value="1"/>
</dbReference>
<dbReference type="InterPro" id="IPR020922">
    <property type="entry name" value="dITP/XTP_pyrophosphatase"/>
</dbReference>
<dbReference type="InterPro" id="IPR029001">
    <property type="entry name" value="ITPase-like_fam"/>
</dbReference>
<dbReference type="InterPro" id="IPR002637">
    <property type="entry name" value="RdgB/HAM1"/>
</dbReference>
<dbReference type="NCBIfam" id="NF011397">
    <property type="entry name" value="PRK14822.1"/>
    <property type="match status" value="1"/>
</dbReference>
<dbReference type="NCBIfam" id="TIGR00042">
    <property type="entry name" value="RdgB/HAM1 family non-canonical purine NTP pyrophosphatase"/>
    <property type="match status" value="1"/>
</dbReference>
<dbReference type="PANTHER" id="PTHR11067:SF9">
    <property type="entry name" value="INOSINE TRIPHOSPHATE PYROPHOSPHATASE"/>
    <property type="match status" value="1"/>
</dbReference>
<dbReference type="PANTHER" id="PTHR11067">
    <property type="entry name" value="INOSINE TRIPHOSPHATE PYROPHOSPHATASE/HAM1 PROTEIN"/>
    <property type="match status" value="1"/>
</dbReference>
<dbReference type="Pfam" id="PF01725">
    <property type="entry name" value="Ham1p_like"/>
    <property type="match status" value="1"/>
</dbReference>
<dbReference type="SUPFAM" id="SSF52972">
    <property type="entry name" value="ITPase-like"/>
    <property type="match status" value="1"/>
</dbReference>
<accession>P64309</accession>
<accession>Q99UV5</accession>
<evidence type="ECO:0000255" key="1">
    <source>
        <dbReference type="HAMAP-Rule" id="MF_01405"/>
    </source>
</evidence>
<comment type="function">
    <text evidence="1">Pyrophosphatase that catalyzes the hydrolysis of nucleoside triphosphates to their monophosphate derivatives, with a high preference for the non-canonical purine nucleotides XTP (xanthosine triphosphate), dITP (deoxyinosine triphosphate) and ITP. Seems to function as a house-cleaning enzyme that removes non-canonical purine nucleotides from the nucleotide pool, thus preventing their incorporation into DNA/RNA and avoiding chromosomal lesions.</text>
</comment>
<comment type="catalytic activity">
    <reaction evidence="1">
        <text>XTP + H2O = XMP + diphosphate + H(+)</text>
        <dbReference type="Rhea" id="RHEA:28610"/>
        <dbReference type="ChEBI" id="CHEBI:15377"/>
        <dbReference type="ChEBI" id="CHEBI:15378"/>
        <dbReference type="ChEBI" id="CHEBI:33019"/>
        <dbReference type="ChEBI" id="CHEBI:57464"/>
        <dbReference type="ChEBI" id="CHEBI:61314"/>
        <dbReference type="EC" id="3.6.1.66"/>
    </reaction>
</comment>
<comment type="catalytic activity">
    <reaction evidence="1">
        <text>dITP + H2O = dIMP + diphosphate + H(+)</text>
        <dbReference type="Rhea" id="RHEA:28342"/>
        <dbReference type="ChEBI" id="CHEBI:15377"/>
        <dbReference type="ChEBI" id="CHEBI:15378"/>
        <dbReference type="ChEBI" id="CHEBI:33019"/>
        <dbReference type="ChEBI" id="CHEBI:61194"/>
        <dbReference type="ChEBI" id="CHEBI:61382"/>
        <dbReference type="EC" id="3.6.1.66"/>
    </reaction>
</comment>
<comment type="catalytic activity">
    <reaction evidence="1">
        <text>ITP + H2O = IMP + diphosphate + H(+)</text>
        <dbReference type="Rhea" id="RHEA:29399"/>
        <dbReference type="ChEBI" id="CHEBI:15377"/>
        <dbReference type="ChEBI" id="CHEBI:15378"/>
        <dbReference type="ChEBI" id="CHEBI:33019"/>
        <dbReference type="ChEBI" id="CHEBI:58053"/>
        <dbReference type="ChEBI" id="CHEBI:61402"/>
        <dbReference type="EC" id="3.6.1.66"/>
    </reaction>
</comment>
<comment type="cofactor">
    <cofactor evidence="1">
        <name>Mg(2+)</name>
        <dbReference type="ChEBI" id="CHEBI:18420"/>
    </cofactor>
    <text evidence="1">Binds 1 Mg(2+) ion per subunit.</text>
</comment>
<comment type="subunit">
    <text evidence="1">Homodimer.</text>
</comment>
<comment type="similarity">
    <text evidence="1">Belongs to the HAM1 NTPase family.</text>
</comment>
<organism>
    <name type="scientific">Staphylococcus aureus (strain Mu50 / ATCC 700699)</name>
    <dbReference type="NCBI Taxonomy" id="158878"/>
    <lineage>
        <taxon>Bacteria</taxon>
        <taxon>Bacillati</taxon>
        <taxon>Bacillota</taxon>
        <taxon>Bacilli</taxon>
        <taxon>Bacillales</taxon>
        <taxon>Staphylococcaceae</taxon>
        <taxon>Staphylococcus</taxon>
    </lineage>
</organism>
<sequence>MKEIVIASNNQGKINDFKVIFPDYHVIGISELIPDFDVEETGSTFEENAILKSEAAAKALNKTVIADDSGLEVFALNGEPGIYSARYAGENKSDEANIEKLLNKLGNTTDRRAQFVCVISMSGPDMETKVFKGTVSGEIADGKYGENGFGYDPIFYVPKLDKTMAQLSKEQKGQISHRRNAINLLQAFLEGEKNV</sequence>
<reference key="1">
    <citation type="journal article" date="2001" name="Lancet">
        <title>Whole genome sequencing of meticillin-resistant Staphylococcus aureus.</title>
        <authorList>
            <person name="Kuroda M."/>
            <person name="Ohta T."/>
            <person name="Uchiyama I."/>
            <person name="Baba T."/>
            <person name="Yuzawa H."/>
            <person name="Kobayashi I."/>
            <person name="Cui L."/>
            <person name="Oguchi A."/>
            <person name="Aoki K."/>
            <person name="Nagai Y."/>
            <person name="Lian J.-Q."/>
            <person name="Ito T."/>
            <person name="Kanamori M."/>
            <person name="Matsumaru H."/>
            <person name="Maruyama A."/>
            <person name="Murakami H."/>
            <person name="Hosoyama A."/>
            <person name="Mizutani-Ui Y."/>
            <person name="Takahashi N.K."/>
            <person name="Sawano T."/>
            <person name="Inoue R."/>
            <person name="Kaito C."/>
            <person name="Sekimizu K."/>
            <person name="Hirakawa H."/>
            <person name="Kuhara S."/>
            <person name="Goto S."/>
            <person name="Yabuzaki J."/>
            <person name="Kanehisa M."/>
            <person name="Yamashita A."/>
            <person name="Oshima K."/>
            <person name="Furuya K."/>
            <person name="Yoshino C."/>
            <person name="Shiba T."/>
            <person name="Hattori M."/>
            <person name="Ogasawara N."/>
            <person name="Hayashi H."/>
            <person name="Hiramatsu K."/>
        </authorList>
    </citation>
    <scope>NUCLEOTIDE SEQUENCE [LARGE SCALE GENOMIC DNA]</scope>
    <source>
        <strain>Mu50 / ATCC 700699</strain>
    </source>
</reference>
<gene>
    <name type="ordered locus">SAV1152</name>
</gene>
<feature type="chain" id="PRO_0000178228" description="dITP/XTP pyrophosphatase">
    <location>
        <begin position="1"/>
        <end position="195"/>
    </location>
</feature>
<feature type="active site" description="Proton acceptor" evidence="1">
    <location>
        <position position="68"/>
    </location>
</feature>
<feature type="binding site" evidence="1">
    <location>
        <begin position="8"/>
        <end position="13"/>
    </location>
    <ligand>
        <name>substrate</name>
    </ligand>
</feature>
<feature type="binding site" evidence="1">
    <location>
        <position position="39"/>
    </location>
    <ligand>
        <name>Mg(2+)</name>
        <dbReference type="ChEBI" id="CHEBI:18420"/>
    </ligand>
</feature>
<feature type="binding site" evidence="1">
    <location>
        <position position="68"/>
    </location>
    <ligand>
        <name>Mg(2+)</name>
        <dbReference type="ChEBI" id="CHEBI:18420"/>
    </ligand>
</feature>
<feature type="binding site" evidence="1">
    <location>
        <position position="69"/>
    </location>
    <ligand>
        <name>substrate</name>
    </ligand>
</feature>
<feature type="binding site" evidence="1">
    <location>
        <begin position="149"/>
        <end position="152"/>
    </location>
    <ligand>
        <name>substrate</name>
    </ligand>
</feature>
<feature type="binding site" evidence="1">
    <location>
        <position position="172"/>
    </location>
    <ligand>
        <name>substrate</name>
    </ligand>
</feature>
<feature type="binding site" evidence="1">
    <location>
        <begin position="177"/>
        <end position="178"/>
    </location>
    <ligand>
        <name>substrate</name>
    </ligand>
</feature>